<comment type="function">
    <text evidence="1">Probably part of an ABC transporter complex. Responsible for energy coupling to the transport system (By similarity).</text>
</comment>
<comment type="subcellular location">
    <subcellularLocation>
        <location evidence="1">Cell membrane</location>
        <topology evidence="1">Peripheral membrane protein</topology>
    </subcellularLocation>
</comment>
<comment type="similarity">
    <text evidence="3">Belongs to the ABC transporter superfamily.</text>
</comment>
<gene>
    <name type="ordered locus">PAM_020</name>
</gene>
<proteinExistence type="inferred from homology"/>
<protein>
    <recommendedName>
        <fullName>Putative ABC transporter ATP-binding protein PAM_020</fullName>
        <ecNumber>7.-.-.-</ecNumber>
    </recommendedName>
</protein>
<name>Y020_ONYPE</name>
<keyword id="KW-0067">ATP-binding</keyword>
<keyword id="KW-1003">Cell membrane</keyword>
<keyword id="KW-0472">Membrane</keyword>
<keyword id="KW-0547">Nucleotide-binding</keyword>
<keyword id="KW-0677">Repeat</keyword>
<keyword id="KW-1278">Translocase</keyword>
<keyword id="KW-0813">Transport</keyword>
<accession>Q6YRJ4</accession>
<feature type="chain" id="PRO_0000092052" description="Putative ABC transporter ATP-binding protein PAM_020">
    <location>
        <begin position="1"/>
        <end position="588"/>
    </location>
</feature>
<feature type="domain" description="ABC transporter 1" evidence="2">
    <location>
        <begin position="6"/>
        <end position="247"/>
    </location>
</feature>
<feature type="domain" description="ABC transporter 2" evidence="2">
    <location>
        <begin position="317"/>
        <end position="551"/>
    </location>
</feature>
<feature type="binding site" evidence="2">
    <location>
        <begin position="40"/>
        <end position="47"/>
    </location>
    <ligand>
        <name>ATP</name>
        <dbReference type="ChEBI" id="CHEBI:30616"/>
        <label>1</label>
    </ligand>
</feature>
<feature type="binding site" evidence="2">
    <location>
        <begin position="351"/>
        <end position="358"/>
    </location>
    <ligand>
        <name>ATP</name>
        <dbReference type="ChEBI" id="CHEBI:30616"/>
        <label>2</label>
    </ligand>
</feature>
<sequence>MPKPLIIFKDFSFQYYSQQTPTLNQINLTIYEGQKVLIVGKNGSGKSTFLKCINGLIPHSYQGKITGTAIIKDKVLTQTNIFDLSLDVGTIMQDTDNQFVGLTVAEDIAFALENDDLPQSEIYQKVNMWAQDLGLQSFLDYKPQELSEGHKQLASMAGVLIYNPSILLFDESLSNLDPVSRAKMTALIKTIHQKYHSTILVIEHYLEDILDDSFDRVIVFEDEKIIYDNSPQKLILENILTKQGIQEPTYISALKKVGINLGSLPYLLNLPALQSLDFVQYFSNQLTNLKKCAISQNDPTQLLPFFPKQFAPFCPILQLQNISYHYESKQPNILNDISLDLFPGKMISIVGKNGSGKSTLAKVICGFSNPQTGTILLNNQDLTHLSLQQRSEKIGFVMQNPHHMISQKTVFEEVALGLLGKQLSLTEIKTKVHAILKTCNLDCFVNRPISALSFGQKKRLTIASILVMQPQILILDEPTIGQDLKHHTQIMTFLQKLNNKGITIIIITHDMSLMLNYTQRTLVLEQGKIIANTTPLKIFTDMSLMQKTSLNPISLIVLINKLPFTSEQKNVLLTQMLAFLKEDCCYGK</sequence>
<dbReference type="EC" id="7.-.-.-"/>
<dbReference type="EMBL" id="AP006628">
    <property type="protein sequence ID" value="BAD04105.1"/>
    <property type="molecule type" value="Genomic_DNA"/>
</dbReference>
<dbReference type="SMR" id="Q6YRJ4"/>
<dbReference type="STRING" id="262768.PAM_020"/>
<dbReference type="KEGG" id="poy:PAM_020"/>
<dbReference type="eggNOG" id="COG1122">
    <property type="taxonomic scope" value="Bacteria"/>
</dbReference>
<dbReference type="HOGENOM" id="CLU_000604_86_7_14"/>
<dbReference type="BioCyc" id="OYEL262768:G1G26-25-MONOMER"/>
<dbReference type="Proteomes" id="UP000002523">
    <property type="component" value="Chromosome"/>
</dbReference>
<dbReference type="GO" id="GO:0043190">
    <property type="term" value="C:ATP-binding cassette (ABC) transporter complex"/>
    <property type="evidence" value="ECO:0007669"/>
    <property type="project" value="TreeGrafter"/>
</dbReference>
<dbReference type="GO" id="GO:0005524">
    <property type="term" value="F:ATP binding"/>
    <property type="evidence" value="ECO:0007669"/>
    <property type="project" value="UniProtKB-KW"/>
</dbReference>
<dbReference type="GO" id="GO:0016887">
    <property type="term" value="F:ATP hydrolysis activity"/>
    <property type="evidence" value="ECO:0007669"/>
    <property type="project" value="InterPro"/>
</dbReference>
<dbReference type="GO" id="GO:0042626">
    <property type="term" value="F:ATPase-coupled transmembrane transporter activity"/>
    <property type="evidence" value="ECO:0007669"/>
    <property type="project" value="TreeGrafter"/>
</dbReference>
<dbReference type="CDD" id="cd03225">
    <property type="entry name" value="ABC_cobalt_CbiO_domain1"/>
    <property type="match status" value="2"/>
</dbReference>
<dbReference type="FunFam" id="3.40.50.300:FF:001422">
    <property type="entry name" value="Cobalt ABC transporter ATP-binding protein"/>
    <property type="match status" value="1"/>
</dbReference>
<dbReference type="FunFam" id="3.40.50.300:FF:000224">
    <property type="entry name" value="Energy-coupling factor transporter ATP-binding protein EcfA"/>
    <property type="match status" value="1"/>
</dbReference>
<dbReference type="Gene3D" id="3.40.50.300">
    <property type="entry name" value="P-loop containing nucleotide triphosphate hydrolases"/>
    <property type="match status" value="2"/>
</dbReference>
<dbReference type="InterPro" id="IPR003593">
    <property type="entry name" value="AAA+_ATPase"/>
</dbReference>
<dbReference type="InterPro" id="IPR022216">
    <property type="entry name" value="ABC_Co_transporter"/>
</dbReference>
<dbReference type="InterPro" id="IPR003439">
    <property type="entry name" value="ABC_transporter-like_ATP-bd"/>
</dbReference>
<dbReference type="InterPro" id="IPR017871">
    <property type="entry name" value="ABC_transporter-like_CS"/>
</dbReference>
<dbReference type="InterPro" id="IPR015856">
    <property type="entry name" value="ABC_transpr_CbiO/EcfA_su"/>
</dbReference>
<dbReference type="InterPro" id="IPR050095">
    <property type="entry name" value="ECF_ABC_transporter_ATP-bd"/>
</dbReference>
<dbReference type="InterPro" id="IPR027417">
    <property type="entry name" value="P-loop_NTPase"/>
</dbReference>
<dbReference type="NCBIfam" id="NF010167">
    <property type="entry name" value="PRK13648.1"/>
    <property type="match status" value="2"/>
</dbReference>
<dbReference type="PANTHER" id="PTHR43553:SF26">
    <property type="entry name" value="ABC TRANSPORTER ATP-BINDING PROTEIN BC_2655-RELATED"/>
    <property type="match status" value="1"/>
</dbReference>
<dbReference type="PANTHER" id="PTHR43553">
    <property type="entry name" value="HEAVY METAL TRANSPORTER"/>
    <property type="match status" value="1"/>
</dbReference>
<dbReference type="Pfam" id="PF00005">
    <property type="entry name" value="ABC_tran"/>
    <property type="match status" value="2"/>
</dbReference>
<dbReference type="Pfam" id="PF12558">
    <property type="entry name" value="DUF3744"/>
    <property type="match status" value="1"/>
</dbReference>
<dbReference type="SMART" id="SM00382">
    <property type="entry name" value="AAA"/>
    <property type="match status" value="2"/>
</dbReference>
<dbReference type="SUPFAM" id="SSF52540">
    <property type="entry name" value="P-loop containing nucleoside triphosphate hydrolases"/>
    <property type="match status" value="2"/>
</dbReference>
<dbReference type="PROSITE" id="PS00211">
    <property type="entry name" value="ABC_TRANSPORTER_1"/>
    <property type="match status" value="1"/>
</dbReference>
<dbReference type="PROSITE" id="PS50893">
    <property type="entry name" value="ABC_TRANSPORTER_2"/>
    <property type="match status" value="2"/>
</dbReference>
<evidence type="ECO:0000250" key="1"/>
<evidence type="ECO:0000255" key="2">
    <source>
        <dbReference type="PROSITE-ProRule" id="PRU00434"/>
    </source>
</evidence>
<evidence type="ECO:0000305" key="3"/>
<reference key="1">
    <citation type="journal article" date="2004" name="Nat. Genet.">
        <title>Reductive evolution suggested from the complete genome sequence of a plant-pathogenic phytoplasma.</title>
        <authorList>
            <person name="Oshima K."/>
            <person name="Kakizawa S."/>
            <person name="Nishigawa H."/>
            <person name="Jung H.-Y."/>
            <person name="Wei W."/>
            <person name="Suzuki S."/>
            <person name="Arashida R."/>
            <person name="Nakata D."/>
            <person name="Miyata S."/>
            <person name="Ugaki M."/>
            <person name="Namba S."/>
        </authorList>
    </citation>
    <scope>NUCLEOTIDE SEQUENCE [LARGE SCALE GENOMIC DNA]</scope>
    <source>
        <strain>OY-M</strain>
    </source>
</reference>
<organism>
    <name type="scientific">Onion yellows phytoplasma (strain OY-M)</name>
    <dbReference type="NCBI Taxonomy" id="262768"/>
    <lineage>
        <taxon>Bacteria</taxon>
        <taxon>Bacillati</taxon>
        <taxon>Mycoplasmatota</taxon>
        <taxon>Mollicutes</taxon>
        <taxon>Acholeplasmatales</taxon>
        <taxon>Acholeplasmataceae</taxon>
        <taxon>Candidatus Phytoplasma</taxon>
        <taxon>16SrI (Aster yellows group)</taxon>
    </lineage>
</organism>